<evidence type="ECO:0000255" key="1">
    <source>
        <dbReference type="HAMAP-Rule" id="MF_00514"/>
    </source>
</evidence>
<evidence type="ECO:0000305" key="2"/>
<comment type="similarity">
    <text evidence="1">Belongs to the bacterial ribosomal protein bL35 family.</text>
</comment>
<protein>
    <recommendedName>
        <fullName evidence="1">Large ribosomal subunit protein bL35</fullName>
    </recommendedName>
    <alternativeName>
        <fullName evidence="2">50S ribosomal protein L35</fullName>
    </alternativeName>
</protein>
<feature type="chain" id="PRO_1000081634" description="Large ribosomal subunit protein bL35">
    <location>
        <begin position="1"/>
        <end position="65"/>
    </location>
</feature>
<keyword id="KW-0687">Ribonucleoprotein</keyword>
<keyword id="KW-0689">Ribosomal protein</keyword>
<dbReference type="EMBL" id="CP000770">
    <property type="protein sequence ID" value="ABS30508.1"/>
    <property type="molecule type" value="Genomic_DNA"/>
</dbReference>
<dbReference type="SMR" id="A8Z5V7"/>
<dbReference type="STRING" id="444179.SMGWSS_093"/>
<dbReference type="KEGG" id="smg:SMGWSS_093"/>
<dbReference type="HOGENOM" id="CLU_169643_3_0_10"/>
<dbReference type="Proteomes" id="UP000000781">
    <property type="component" value="Chromosome"/>
</dbReference>
<dbReference type="GO" id="GO:0022625">
    <property type="term" value="C:cytosolic large ribosomal subunit"/>
    <property type="evidence" value="ECO:0007669"/>
    <property type="project" value="TreeGrafter"/>
</dbReference>
<dbReference type="GO" id="GO:0003735">
    <property type="term" value="F:structural constituent of ribosome"/>
    <property type="evidence" value="ECO:0007669"/>
    <property type="project" value="InterPro"/>
</dbReference>
<dbReference type="GO" id="GO:0006412">
    <property type="term" value="P:translation"/>
    <property type="evidence" value="ECO:0007669"/>
    <property type="project" value="UniProtKB-UniRule"/>
</dbReference>
<dbReference type="FunFam" id="4.10.410.60:FF:000001">
    <property type="entry name" value="50S ribosomal protein L35"/>
    <property type="match status" value="1"/>
</dbReference>
<dbReference type="Gene3D" id="4.10.410.60">
    <property type="match status" value="1"/>
</dbReference>
<dbReference type="HAMAP" id="MF_00514">
    <property type="entry name" value="Ribosomal_bL35"/>
    <property type="match status" value="1"/>
</dbReference>
<dbReference type="InterPro" id="IPR001706">
    <property type="entry name" value="Ribosomal_bL35"/>
</dbReference>
<dbReference type="InterPro" id="IPR021137">
    <property type="entry name" value="Ribosomal_bL35-like"/>
</dbReference>
<dbReference type="InterPro" id="IPR018265">
    <property type="entry name" value="Ribosomal_bL35_CS"/>
</dbReference>
<dbReference type="InterPro" id="IPR037229">
    <property type="entry name" value="Ribosomal_bL35_sf"/>
</dbReference>
<dbReference type="NCBIfam" id="TIGR00001">
    <property type="entry name" value="rpmI_bact"/>
    <property type="match status" value="1"/>
</dbReference>
<dbReference type="PANTHER" id="PTHR33343">
    <property type="entry name" value="54S RIBOSOMAL PROTEIN BL35M"/>
    <property type="match status" value="1"/>
</dbReference>
<dbReference type="PANTHER" id="PTHR33343:SF1">
    <property type="entry name" value="LARGE RIBOSOMAL SUBUNIT PROTEIN BL35M"/>
    <property type="match status" value="1"/>
</dbReference>
<dbReference type="Pfam" id="PF01632">
    <property type="entry name" value="Ribosomal_L35p"/>
    <property type="match status" value="1"/>
</dbReference>
<dbReference type="PRINTS" id="PR00064">
    <property type="entry name" value="RIBOSOMALL35"/>
</dbReference>
<dbReference type="SUPFAM" id="SSF143034">
    <property type="entry name" value="L35p-like"/>
    <property type="match status" value="1"/>
</dbReference>
<dbReference type="PROSITE" id="PS00936">
    <property type="entry name" value="RIBOSOMAL_L35"/>
    <property type="match status" value="1"/>
</dbReference>
<sequence>MFKLKTKSGAKKRFKFIVNGKIKRKKSFKNHLLTKKENKRKRRLSYFSRVHKSDIKNIKKQLLLN</sequence>
<name>RL35_KARMG</name>
<reference key="1">
    <citation type="journal article" date="2007" name="Proc. Natl. Acad. Sci. U.S.A.">
        <title>Parallel genomic evolution and metabolic interdependence in an ancient symbiosis.</title>
        <authorList>
            <person name="McCutcheon J.P."/>
            <person name="Moran N.A."/>
        </authorList>
    </citation>
    <scope>NUCLEOTIDE SEQUENCE [LARGE SCALE GENOMIC DNA]</scope>
    <source>
        <strain>GWSS</strain>
    </source>
</reference>
<proteinExistence type="inferred from homology"/>
<organism>
    <name type="scientific">Karelsulcia muelleri (strain GWSS)</name>
    <name type="common">Sulcia muelleri</name>
    <dbReference type="NCBI Taxonomy" id="444179"/>
    <lineage>
        <taxon>Bacteria</taxon>
        <taxon>Pseudomonadati</taxon>
        <taxon>Bacteroidota</taxon>
        <taxon>Flavobacteriia</taxon>
        <taxon>Flavobacteriales</taxon>
        <taxon>Candidatus Karelsulcia</taxon>
    </lineage>
</organism>
<gene>
    <name evidence="1" type="primary">rpmI</name>
    <name type="ordered locus">SMGWSS_093</name>
</gene>
<accession>A8Z5V7</accession>